<reference key="1">
    <citation type="journal article" date="2012" name="Environ. Microbiol.">
        <title>The genome sequence of Desulfatibacillum alkenivorans AK-01: a blueprint for anaerobic alkane oxidation.</title>
        <authorList>
            <person name="Callaghan A.V."/>
            <person name="Morris B.E."/>
            <person name="Pereira I.A."/>
            <person name="McInerney M.J."/>
            <person name="Austin R.N."/>
            <person name="Groves J.T."/>
            <person name="Kukor J.J."/>
            <person name="Suflita J.M."/>
            <person name="Young L.Y."/>
            <person name="Zylstra G.J."/>
            <person name="Wawrik B."/>
        </authorList>
    </citation>
    <scope>NUCLEOTIDE SEQUENCE [LARGE SCALE GENOMIC DNA]</scope>
    <source>
        <strain>AK-01</strain>
    </source>
</reference>
<feature type="chain" id="PRO_1000199540" description="Threonine--tRNA ligase">
    <location>
        <begin position="1"/>
        <end position="636"/>
    </location>
</feature>
<feature type="domain" description="TGS" evidence="2">
    <location>
        <begin position="1"/>
        <end position="61"/>
    </location>
</feature>
<feature type="region of interest" description="Catalytic" evidence="1">
    <location>
        <begin position="238"/>
        <end position="528"/>
    </location>
</feature>
<feature type="binding site" evidence="1">
    <location>
        <position position="329"/>
    </location>
    <ligand>
        <name>Zn(2+)</name>
        <dbReference type="ChEBI" id="CHEBI:29105"/>
    </ligand>
</feature>
<feature type="binding site" evidence="1">
    <location>
        <position position="380"/>
    </location>
    <ligand>
        <name>Zn(2+)</name>
        <dbReference type="ChEBI" id="CHEBI:29105"/>
    </ligand>
</feature>
<feature type="binding site" evidence="1">
    <location>
        <position position="505"/>
    </location>
    <ligand>
        <name>Zn(2+)</name>
        <dbReference type="ChEBI" id="CHEBI:29105"/>
    </ligand>
</feature>
<dbReference type="EC" id="6.1.1.3" evidence="1"/>
<dbReference type="EMBL" id="CP001322">
    <property type="protein sequence ID" value="ACL05896.1"/>
    <property type="molecule type" value="Genomic_DNA"/>
</dbReference>
<dbReference type="RefSeq" id="WP_015948943.1">
    <property type="nucleotide sequence ID" value="NC_011768.1"/>
</dbReference>
<dbReference type="SMR" id="B8FN26"/>
<dbReference type="KEGG" id="dal:Dalk_4214"/>
<dbReference type="eggNOG" id="COG0441">
    <property type="taxonomic scope" value="Bacteria"/>
</dbReference>
<dbReference type="HOGENOM" id="CLU_008554_0_1_7"/>
<dbReference type="Proteomes" id="UP000000739">
    <property type="component" value="Chromosome"/>
</dbReference>
<dbReference type="GO" id="GO:0005737">
    <property type="term" value="C:cytoplasm"/>
    <property type="evidence" value="ECO:0007669"/>
    <property type="project" value="UniProtKB-SubCell"/>
</dbReference>
<dbReference type="GO" id="GO:0005524">
    <property type="term" value="F:ATP binding"/>
    <property type="evidence" value="ECO:0007669"/>
    <property type="project" value="UniProtKB-UniRule"/>
</dbReference>
<dbReference type="GO" id="GO:0046872">
    <property type="term" value="F:metal ion binding"/>
    <property type="evidence" value="ECO:0007669"/>
    <property type="project" value="UniProtKB-KW"/>
</dbReference>
<dbReference type="GO" id="GO:0004829">
    <property type="term" value="F:threonine-tRNA ligase activity"/>
    <property type="evidence" value="ECO:0007669"/>
    <property type="project" value="UniProtKB-UniRule"/>
</dbReference>
<dbReference type="GO" id="GO:0000049">
    <property type="term" value="F:tRNA binding"/>
    <property type="evidence" value="ECO:0007669"/>
    <property type="project" value="UniProtKB-KW"/>
</dbReference>
<dbReference type="GO" id="GO:0006435">
    <property type="term" value="P:threonyl-tRNA aminoacylation"/>
    <property type="evidence" value="ECO:0007669"/>
    <property type="project" value="UniProtKB-UniRule"/>
</dbReference>
<dbReference type="CDD" id="cd01667">
    <property type="entry name" value="TGS_ThrRS"/>
    <property type="match status" value="1"/>
</dbReference>
<dbReference type="CDD" id="cd00860">
    <property type="entry name" value="ThrRS_anticodon"/>
    <property type="match status" value="1"/>
</dbReference>
<dbReference type="CDD" id="cd00771">
    <property type="entry name" value="ThrRS_core"/>
    <property type="match status" value="1"/>
</dbReference>
<dbReference type="FunFam" id="3.10.20.30:FF:000005">
    <property type="entry name" value="Threonine--tRNA ligase"/>
    <property type="match status" value="1"/>
</dbReference>
<dbReference type="FunFam" id="3.30.930.10:FF:000019">
    <property type="entry name" value="Threonine--tRNA ligase"/>
    <property type="match status" value="1"/>
</dbReference>
<dbReference type="FunFam" id="3.40.50.800:FF:000001">
    <property type="entry name" value="Threonine--tRNA ligase"/>
    <property type="match status" value="1"/>
</dbReference>
<dbReference type="FunFam" id="3.30.980.10:FF:000005">
    <property type="entry name" value="Threonyl-tRNA synthetase, mitochondrial"/>
    <property type="match status" value="1"/>
</dbReference>
<dbReference type="Gene3D" id="3.10.20.30">
    <property type="match status" value="1"/>
</dbReference>
<dbReference type="Gene3D" id="3.30.54.20">
    <property type="match status" value="1"/>
</dbReference>
<dbReference type="Gene3D" id="3.40.50.800">
    <property type="entry name" value="Anticodon-binding domain"/>
    <property type="match status" value="1"/>
</dbReference>
<dbReference type="Gene3D" id="3.30.930.10">
    <property type="entry name" value="Bira Bifunctional Protein, Domain 2"/>
    <property type="match status" value="1"/>
</dbReference>
<dbReference type="Gene3D" id="3.30.980.10">
    <property type="entry name" value="Threonyl-trna Synthetase, Chain A, domain 2"/>
    <property type="match status" value="1"/>
</dbReference>
<dbReference type="HAMAP" id="MF_00184">
    <property type="entry name" value="Thr_tRNA_synth"/>
    <property type="match status" value="1"/>
</dbReference>
<dbReference type="InterPro" id="IPR002314">
    <property type="entry name" value="aa-tRNA-synt_IIb"/>
</dbReference>
<dbReference type="InterPro" id="IPR006195">
    <property type="entry name" value="aa-tRNA-synth_II"/>
</dbReference>
<dbReference type="InterPro" id="IPR045864">
    <property type="entry name" value="aa-tRNA-synth_II/BPL/LPL"/>
</dbReference>
<dbReference type="InterPro" id="IPR004154">
    <property type="entry name" value="Anticodon-bd"/>
</dbReference>
<dbReference type="InterPro" id="IPR036621">
    <property type="entry name" value="Anticodon-bd_dom_sf"/>
</dbReference>
<dbReference type="InterPro" id="IPR012675">
    <property type="entry name" value="Beta-grasp_dom_sf"/>
</dbReference>
<dbReference type="InterPro" id="IPR004095">
    <property type="entry name" value="TGS"/>
</dbReference>
<dbReference type="InterPro" id="IPR012676">
    <property type="entry name" value="TGS-like"/>
</dbReference>
<dbReference type="InterPro" id="IPR002320">
    <property type="entry name" value="Thr-tRNA-ligase_IIa"/>
</dbReference>
<dbReference type="InterPro" id="IPR018163">
    <property type="entry name" value="Thr/Ala-tRNA-synth_IIc_edit"/>
</dbReference>
<dbReference type="InterPro" id="IPR047246">
    <property type="entry name" value="ThrRS_anticodon"/>
</dbReference>
<dbReference type="InterPro" id="IPR033728">
    <property type="entry name" value="ThrRS_core"/>
</dbReference>
<dbReference type="InterPro" id="IPR012947">
    <property type="entry name" value="tRNA_SAD"/>
</dbReference>
<dbReference type="NCBIfam" id="TIGR00418">
    <property type="entry name" value="thrS"/>
    <property type="match status" value="1"/>
</dbReference>
<dbReference type="PANTHER" id="PTHR11451:SF44">
    <property type="entry name" value="THREONINE--TRNA LIGASE, CHLOROPLASTIC_MITOCHONDRIAL 2"/>
    <property type="match status" value="1"/>
</dbReference>
<dbReference type="PANTHER" id="PTHR11451">
    <property type="entry name" value="THREONINE-TRNA LIGASE"/>
    <property type="match status" value="1"/>
</dbReference>
<dbReference type="Pfam" id="PF03129">
    <property type="entry name" value="HGTP_anticodon"/>
    <property type="match status" value="1"/>
</dbReference>
<dbReference type="Pfam" id="PF02824">
    <property type="entry name" value="TGS"/>
    <property type="match status" value="1"/>
</dbReference>
<dbReference type="Pfam" id="PF00587">
    <property type="entry name" value="tRNA-synt_2b"/>
    <property type="match status" value="1"/>
</dbReference>
<dbReference type="Pfam" id="PF07973">
    <property type="entry name" value="tRNA_SAD"/>
    <property type="match status" value="1"/>
</dbReference>
<dbReference type="PRINTS" id="PR01047">
    <property type="entry name" value="TRNASYNTHTHR"/>
</dbReference>
<dbReference type="SMART" id="SM00863">
    <property type="entry name" value="tRNA_SAD"/>
    <property type="match status" value="1"/>
</dbReference>
<dbReference type="SUPFAM" id="SSF52954">
    <property type="entry name" value="Class II aaRS ABD-related"/>
    <property type="match status" value="1"/>
</dbReference>
<dbReference type="SUPFAM" id="SSF55681">
    <property type="entry name" value="Class II aaRS and biotin synthetases"/>
    <property type="match status" value="1"/>
</dbReference>
<dbReference type="SUPFAM" id="SSF81271">
    <property type="entry name" value="TGS-like"/>
    <property type="match status" value="1"/>
</dbReference>
<dbReference type="SUPFAM" id="SSF55186">
    <property type="entry name" value="ThrRS/AlaRS common domain"/>
    <property type="match status" value="1"/>
</dbReference>
<dbReference type="PROSITE" id="PS50862">
    <property type="entry name" value="AA_TRNA_LIGASE_II"/>
    <property type="match status" value="1"/>
</dbReference>
<dbReference type="PROSITE" id="PS51880">
    <property type="entry name" value="TGS"/>
    <property type="match status" value="1"/>
</dbReference>
<sequence>MINITLPDGKIVESDGPVSGEDVAKGISEGFARNCVAVEVDGKLTDLSTPIETDASVVFITTKDEQGLDIMRHSAAHVMAEAILNLYPDAKLTIGPVIEDGFYYDIDMPPISEDDFPKIEQEINKIIKAKKPFVRKTLSKAEALDFYKDNAFKTELISELEDGTISIYEQGGFTDLCRGPHVPNTGLVKTLKLMKVSGAYWRGDSERPMLQRLYGTAFFDKKELKSYLHLLEEAKKRDHRKLGTALDLFSFHEEAAGMPFFHARGMELWNALLAYWREEHKKAGYVETKTPIMLNKSLWERSGHWENYRENMYTSLIEDFDYAIKPMNCPGGMLLYKTKHHSYNDLPIRAGEIGLVHRHELSGVLSGLFRVRAFHQDDAHIFMTEEMIEDEILGVLQLVERMYSTFGLGFHLELSTRPEKTIGTDEQWEKATEGLRAALDKSGRDYKINEGDGAFYGPKIDIHIKDALGRTWQCGTIQLDMNLPERFDLTYVGADNQRHRPVMIHRVIYGSIERFLGILIEHYAGKFPLWLSPCQAVVLAMNDDVAGYAKEVKARLEEAGLRMEIDLRAESINKKVRDAQLSKIPLMLTVGGKEEAAQTLAVRTLDGKVKYGVTIDNFLDKVLPHIETRNPDLVEF</sequence>
<keyword id="KW-0030">Aminoacyl-tRNA synthetase</keyword>
<keyword id="KW-0067">ATP-binding</keyword>
<keyword id="KW-0963">Cytoplasm</keyword>
<keyword id="KW-0436">Ligase</keyword>
<keyword id="KW-0479">Metal-binding</keyword>
<keyword id="KW-0547">Nucleotide-binding</keyword>
<keyword id="KW-0648">Protein biosynthesis</keyword>
<keyword id="KW-1185">Reference proteome</keyword>
<keyword id="KW-0694">RNA-binding</keyword>
<keyword id="KW-0820">tRNA-binding</keyword>
<keyword id="KW-0862">Zinc</keyword>
<protein>
    <recommendedName>
        <fullName evidence="1">Threonine--tRNA ligase</fullName>
        <ecNumber evidence="1">6.1.1.3</ecNumber>
    </recommendedName>
    <alternativeName>
        <fullName evidence="1">Threonyl-tRNA synthetase</fullName>
        <shortName evidence="1">ThrRS</shortName>
    </alternativeName>
</protein>
<evidence type="ECO:0000255" key="1">
    <source>
        <dbReference type="HAMAP-Rule" id="MF_00184"/>
    </source>
</evidence>
<evidence type="ECO:0000255" key="2">
    <source>
        <dbReference type="PROSITE-ProRule" id="PRU01228"/>
    </source>
</evidence>
<organism>
    <name type="scientific">Desulfatibacillum aliphaticivorans</name>
    <dbReference type="NCBI Taxonomy" id="218208"/>
    <lineage>
        <taxon>Bacteria</taxon>
        <taxon>Pseudomonadati</taxon>
        <taxon>Thermodesulfobacteriota</taxon>
        <taxon>Desulfobacteria</taxon>
        <taxon>Desulfobacterales</taxon>
        <taxon>Desulfatibacillaceae</taxon>
        <taxon>Desulfatibacillum</taxon>
    </lineage>
</organism>
<accession>B8FN26</accession>
<comment type="function">
    <text evidence="1">Catalyzes the attachment of threonine to tRNA(Thr) in a two-step reaction: L-threonine is first activated by ATP to form Thr-AMP and then transferred to the acceptor end of tRNA(Thr). Also edits incorrectly charged L-seryl-tRNA(Thr).</text>
</comment>
<comment type="catalytic activity">
    <reaction evidence="1">
        <text>tRNA(Thr) + L-threonine + ATP = L-threonyl-tRNA(Thr) + AMP + diphosphate + H(+)</text>
        <dbReference type="Rhea" id="RHEA:24624"/>
        <dbReference type="Rhea" id="RHEA-COMP:9670"/>
        <dbReference type="Rhea" id="RHEA-COMP:9704"/>
        <dbReference type="ChEBI" id="CHEBI:15378"/>
        <dbReference type="ChEBI" id="CHEBI:30616"/>
        <dbReference type="ChEBI" id="CHEBI:33019"/>
        <dbReference type="ChEBI" id="CHEBI:57926"/>
        <dbReference type="ChEBI" id="CHEBI:78442"/>
        <dbReference type="ChEBI" id="CHEBI:78534"/>
        <dbReference type="ChEBI" id="CHEBI:456215"/>
        <dbReference type="EC" id="6.1.1.3"/>
    </reaction>
</comment>
<comment type="cofactor">
    <cofactor evidence="1">
        <name>Zn(2+)</name>
        <dbReference type="ChEBI" id="CHEBI:29105"/>
    </cofactor>
    <text evidence="1">Binds 1 zinc ion per subunit.</text>
</comment>
<comment type="subunit">
    <text evidence="1">Homodimer.</text>
</comment>
<comment type="subcellular location">
    <subcellularLocation>
        <location evidence="1">Cytoplasm</location>
    </subcellularLocation>
</comment>
<comment type="similarity">
    <text evidence="1">Belongs to the class-II aminoacyl-tRNA synthetase family.</text>
</comment>
<proteinExistence type="inferred from homology"/>
<gene>
    <name evidence="1" type="primary">thrS</name>
    <name type="ordered locus">Dalk_4214</name>
</gene>
<name>SYT_DESAL</name>